<accession>P57252</accession>
<sequence length="134" mass="15419">MLINTEAVNEYLSFFMFIFFSLGLCFFMLCLSWILGGRSSSRYKNTPFESGIVSSGNTNLYFSVKFYLIAMFFVVFDVEALYLYAWSVSIKESGWIGFSEALMFGISLLLGLFYLVRIRALNWSSSVKNNIQLF</sequence>
<reference key="1">
    <citation type="journal article" date="2000" name="Nature">
        <title>Genome sequence of the endocellular bacterial symbiont of aphids Buchnera sp. APS.</title>
        <authorList>
            <person name="Shigenobu S."/>
            <person name="Watanabe H."/>
            <person name="Hattori M."/>
            <person name="Sakaki Y."/>
            <person name="Ishikawa H."/>
        </authorList>
    </citation>
    <scope>NUCLEOTIDE SEQUENCE [LARGE SCALE GENOMIC DNA]</scope>
    <source>
        <strain>APS</strain>
    </source>
</reference>
<protein>
    <recommendedName>
        <fullName evidence="1">NADH-quinone oxidoreductase subunit A</fullName>
        <ecNumber evidence="1">7.1.1.-</ecNumber>
    </recommendedName>
    <alternativeName>
        <fullName evidence="1">NADH dehydrogenase I subunit A</fullName>
    </alternativeName>
    <alternativeName>
        <fullName evidence="1">NDH-1 subunit A</fullName>
    </alternativeName>
    <alternativeName>
        <fullName evidence="1">NUO1</fullName>
    </alternativeName>
</protein>
<keyword id="KW-1003">Cell membrane</keyword>
<keyword id="KW-0472">Membrane</keyword>
<keyword id="KW-0520">NAD</keyword>
<keyword id="KW-0874">Quinone</keyword>
<keyword id="KW-1185">Reference proteome</keyword>
<keyword id="KW-1278">Translocase</keyword>
<keyword id="KW-0812">Transmembrane</keyword>
<keyword id="KW-1133">Transmembrane helix</keyword>
<keyword id="KW-0813">Transport</keyword>
<keyword id="KW-0830">Ubiquinone</keyword>
<comment type="function">
    <text evidence="1">NDH-1 shuttles electrons from NADH, via FMN and iron-sulfur (Fe-S) centers, to quinones in the respiratory chain. The immediate electron acceptor for the enzyme in this species is believed to be ubiquinone. Couples the redox reaction to proton translocation (for every two electrons transferred, four hydrogen ions are translocated across the cytoplasmic membrane), and thus conserves the redox energy in a proton gradient.</text>
</comment>
<comment type="catalytic activity">
    <reaction evidence="1">
        <text>a quinone + NADH + 5 H(+)(in) = a quinol + NAD(+) + 4 H(+)(out)</text>
        <dbReference type="Rhea" id="RHEA:57888"/>
        <dbReference type="ChEBI" id="CHEBI:15378"/>
        <dbReference type="ChEBI" id="CHEBI:24646"/>
        <dbReference type="ChEBI" id="CHEBI:57540"/>
        <dbReference type="ChEBI" id="CHEBI:57945"/>
        <dbReference type="ChEBI" id="CHEBI:132124"/>
    </reaction>
</comment>
<comment type="subunit">
    <text evidence="1">NDH-1 is composed of 13 different subunits. Subunits NuoA, H, J, K, L, M, N constitute the membrane sector of the complex.</text>
</comment>
<comment type="subcellular location">
    <subcellularLocation>
        <location evidence="1">Cell membrane</location>
        <topology evidence="1">Multi-pass membrane protein</topology>
    </subcellularLocation>
</comment>
<comment type="similarity">
    <text evidence="1">Belongs to the complex I subunit 3 family.</text>
</comment>
<dbReference type="EC" id="7.1.1.-" evidence="1"/>
<dbReference type="EMBL" id="BA000003">
    <property type="protein sequence ID" value="BAB12872.1"/>
    <property type="molecule type" value="Genomic_DNA"/>
</dbReference>
<dbReference type="RefSeq" id="NP_239986.1">
    <property type="nucleotide sequence ID" value="NC_002528.1"/>
</dbReference>
<dbReference type="SMR" id="P57252"/>
<dbReference type="STRING" id="563178.BUAP5A_152"/>
<dbReference type="EnsemblBacteria" id="BAB12872">
    <property type="protein sequence ID" value="BAB12872"/>
    <property type="gene ID" value="BAB12872"/>
</dbReference>
<dbReference type="KEGG" id="buc:BU154"/>
<dbReference type="PATRIC" id="fig|107806.10.peg.164"/>
<dbReference type="eggNOG" id="COG0838">
    <property type="taxonomic scope" value="Bacteria"/>
</dbReference>
<dbReference type="HOGENOM" id="CLU_119549_2_1_6"/>
<dbReference type="Proteomes" id="UP000001806">
    <property type="component" value="Chromosome"/>
</dbReference>
<dbReference type="GO" id="GO:0030964">
    <property type="term" value="C:NADH dehydrogenase complex"/>
    <property type="evidence" value="ECO:0007669"/>
    <property type="project" value="TreeGrafter"/>
</dbReference>
<dbReference type="GO" id="GO:0005886">
    <property type="term" value="C:plasma membrane"/>
    <property type="evidence" value="ECO:0007669"/>
    <property type="project" value="UniProtKB-SubCell"/>
</dbReference>
<dbReference type="GO" id="GO:0008137">
    <property type="term" value="F:NADH dehydrogenase (ubiquinone) activity"/>
    <property type="evidence" value="ECO:0007669"/>
    <property type="project" value="InterPro"/>
</dbReference>
<dbReference type="GO" id="GO:0050136">
    <property type="term" value="F:NADH:ubiquinone reductase (non-electrogenic) activity"/>
    <property type="evidence" value="ECO:0007669"/>
    <property type="project" value="UniProtKB-UniRule"/>
</dbReference>
<dbReference type="GO" id="GO:0048038">
    <property type="term" value="F:quinone binding"/>
    <property type="evidence" value="ECO:0007669"/>
    <property type="project" value="UniProtKB-KW"/>
</dbReference>
<dbReference type="Gene3D" id="1.20.58.1610">
    <property type="entry name" value="NADH:ubiquinone/plastoquinone oxidoreductase, chain 3"/>
    <property type="match status" value="1"/>
</dbReference>
<dbReference type="HAMAP" id="MF_01394">
    <property type="entry name" value="NDH1_NuoA"/>
    <property type="match status" value="1"/>
</dbReference>
<dbReference type="InterPro" id="IPR023043">
    <property type="entry name" value="NAD(P)H_OxRDtase_bac/plastid"/>
</dbReference>
<dbReference type="InterPro" id="IPR000440">
    <property type="entry name" value="NADH_UbQ/plastoQ_OxRdtase_su3"/>
</dbReference>
<dbReference type="InterPro" id="IPR038430">
    <property type="entry name" value="NDAH_ubi_oxred_su3_sf"/>
</dbReference>
<dbReference type="PANTHER" id="PTHR11058:SF21">
    <property type="entry name" value="NADH-QUINONE OXIDOREDUCTASE SUBUNIT A"/>
    <property type="match status" value="1"/>
</dbReference>
<dbReference type="PANTHER" id="PTHR11058">
    <property type="entry name" value="NADH-UBIQUINONE OXIDOREDUCTASE CHAIN 3"/>
    <property type="match status" value="1"/>
</dbReference>
<dbReference type="Pfam" id="PF00507">
    <property type="entry name" value="Oxidored_q4"/>
    <property type="match status" value="1"/>
</dbReference>
<gene>
    <name evidence="1" type="primary">nuoA</name>
    <name type="ordered locus">BU154</name>
</gene>
<name>NUOA_BUCAI</name>
<organism>
    <name type="scientific">Buchnera aphidicola subsp. Acyrthosiphon pisum (strain APS)</name>
    <name type="common">Acyrthosiphon pisum symbiotic bacterium</name>
    <dbReference type="NCBI Taxonomy" id="107806"/>
    <lineage>
        <taxon>Bacteria</taxon>
        <taxon>Pseudomonadati</taxon>
        <taxon>Pseudomonadota</taxon>
        <taxon>Gammaproteobacteria</taxon>
        <taxon>Enterobacterales</taxon>
        <taxon>Erwiniaceae</taxon>
        <taxon>Buchnera</taxon>
    </lineage>
</organism>
<evidence type="ECO:0000255" key="1">
    <source>
        <dbReference type="HAMAP-Rule" id="MF_01394"/>
    </source>
</evidence>
<feature type="chain" id="PRO_0000117866" description="NADH-quinone oxidoreductase subunit A">
    <location>
        <begin position="1"/>
        <end position="134"/>
    </location>
</feature>
<feature type="transmembrane region" description="Helical" evidence="1">
    <location>
        <begin position="14"/>
        <end position="34"/>
    </location>
</feature>
<feature type="transmembrane region" description="Helical" evidence="1">
    <location>
        <begin position="66"/>
        <end position="86"/>
    </location>
</feature>
<feature type="transmembrane region" description="Helical" evidence="1">
    <location>
        <begin position="96"/>
        <end position="116"/>
    </location>
</feature>
<proteinExistence type="inferred from homology"/>